<evidence type="ECO:0000255" key="1">
    <source>
        <dbReference type="HAMAP-Rule" id="MF_03193"/>
    </source>
</evidence>
<keyword id="KW-0966">Cell projection</keyword>
<keyword id="KW-0274">FAD</keyword>
<keyword id="KW-0285">Flavoprotein</keyword>
<keyword id="KW-0333">Golgi apparatus</keyword>
<keyword id="KW-0472">Membrane</keyword>
<keyword id="KW-0496">Mitochondrion</keyword>
<keyword id="KW-0999">Mitochondrion inner membrane</keyword>
<keyword id="KW-0503">Monooxygenase</keyword>
<keyword id="KW-0560">Oxidoreductase</keyword>
<keyword id="KW-1185">Reference proteome</keyword>
<keyword id="KW-0809">Transit peptide</keyword>
<keyword id="KW-0831">Ubiquinone biosynthesis</keyword>
<name>COQ6_XENTR</name>
<proteinExistence type="evidence at transcript level"/>
<accession>Q6DF46</accession>
<protein>
    <recommendedName>
        <fullName evidence="1">Ubiquinone biosynthesis monooxygenase COQ6, mitochondrial</fullName>
        <ecNumber evidence="1">1.14.15.45</ecNumber>
    </recommendedName>
    <alternativeName>
        <fullName evidence="1">2-methoxy-6-polyprenolphenol 4-hydroxylase</fullName>
        <ecNumber evidence="1">1.14.15.46</ecNumber>
    </alternativeName>
    <alternativeName>
        <fullName evidence="1">Coenzyme Q10 monooxygenase 6</fullName>
    </alternativeName>
</protein>
<gene>
    <name evidence="1" type="primary">coq6</name>
    <name type="ORF">TEgg013o11.1</name>
</gene>
<reference key="1">
    <citation type="submission" date="2006-10" db="EMBL/GenBank/DDBJ databases">
        <authorList>
            <consortium name="Sanger Xenopus tropicalis EST/cDNA project"/>
        </authorList>
    </citation>
    <scope>NUCLEOTIDE SEQUENCE [LARGE SCALE MRNA]</scope>
    <source>
        <tissue>Egg</tissue>
    </source>
</reference>
<reference key="2">
    <citation type="journal article" date="2010" name="Science">
        <title>The genome of the Western clawed frog Xenopus tropicalis.</title>
        <authorList>
            <person name="Hellsten U."/>
            <person name="Harland R.M."/>
            <person name="Gilchrist M.J."/>
            <person name="Hendrix D."/>
            <person name="Jurka J."/>
            <person name="Kapitonov V."/>
            <person name="Ovcharenko I."/>
            <person name="Putnam N.H."/>
            <person name="Shu S."/>
            <person name="Taher L."/>
            <person name="Blitz I.L."/>
            <person name="Blumberg B."/>
            <person name="Dichmann D.S."/>
            <person name="Dubchak I."/>
            <person name="Amaya E."/>
            <person name="Detter J.C."/>
            <person name="Fletcher R."/>
            <person name="Gerhard D.S."/>
            <person name="Goodstein D."/>
            <person name="Graves T."/>
            <person name="Grigoriev I.V."/>
            <person name="Grimwood J."/>
            <person name="Kawashima T."/>
            <person name="Lindquist E."/>
            <person name="Lucas S.M."/>
            <person name="Mead P.E."/>
            <person name="Mitros T."/>
            <person name="Ogino H."/>
            <person name="Ohta Y."/>
            <person name="Poliakov A.V."/>
            <person name="Pollet N."/>
            <person name="Robert J."/>
            <person name="Salamov A."/>
            <person name="Sater A.K."/>
            <person name="Schmutz J."/>
            <person name="Terry A."/>
            <person name="Vize P.D."/>
            <person name="Warren W.C."/>
            <person name="Wells D."/>
            <person name="Wills A."/>
            <person name="Wilson R.K."/>
            <person name="Zimmerman L.B."/>
            <person name="Zorn A.M."/>
            <person name="Grainger R."/>
            <person name="Grammer T."/>
            <person name="Khokha M.K."/>
            <person name="Richardson P.M."/>
            <person name="Rokhsar D.S."/>
        </authorList>
    </citation>
    <scope>NUCLEOTIDE SEQUENCE [LARGE SCALE GENOMIC DNA]</scope>
</reference>
<reference key="3">
    <citation type="submission" date="2004-07" db="EMBL/GenBank/DDBJ databases">
        <authorList>
            <consortium name="NIH - Xenopus Gene Collection (XGC) project"/>
        </authorList>
    </citation>
    <scope>NUCLEOTIDE SEQUENCE [LARGE SCALE MRNA]</scope>
</reference>
<feature type="transit peptide" description="Mitochondrion" evidence="1">
    <location>
        <begin position="1"/>
        <end position="24"/>
    </location>
</feature>
<feature type="chain" id="PRO_0000418623" description="Ubiquinone biosynthesis monooxygenase COQ6, mitochondrial">
    <location>
        <begin position="25"/>
        <end position="464"/>
    </location>
</feature>
<sequence>MRCLGGSSLSRLLRMLSQSQGRALSSTGPAVYDVVISGGGMVGTAMACALGSDPHLQHKKVLLLEAGNRKPFDHLPENFSNRVSSITPGSATLLASFGAWDHILAMRLKPYKRMQVWDACSDALITFDKDALEDMGYIVENDIIIEALTKQLELMSDHVEVMYRSRALSYSWPPPYNNGKATPWVEIELADGQRLHTKLLIGADGHNSMVRSAAGMQSVQWNYNHAAVVATLHLSEATDNNVAWQRFLPTGPIALLPLSDTCSSLVWSTSPEHASELVSMDEESFVDTVNSAFWSNENHSEFITSAGSLLHSALSFFMPTGSSPRQLPPSVSRVEQNSRASFPLGLKHATEYIRHRVALIGDAAHRVHPLAGQGVNMGFGDVACLAHHLSQAAFNGSDLGSTKHLLEYETERQRHNLPLMAAVDLLKRLYNTKQPPIVLLRTLGLQATNALTPVKEQIMAFASK</sequence>
<dbReference type="EC" id="1.14.15.45" evidence="1"/>
<dbReference type="EC" id="1.14.15.46" evidence="1"/>
<dbReference type="EMBL" id="CR761032">
    <property type="protein sequence ID" value="CAJ83665.1"/>
    <property type="molecule type" value="mRNA"/>
</dbReference>
<dbReference type="EMBL" id="AAMC01082860">
    <property type="status" value="NOT_ANNOTATED_CDS"/>
    <property type="molecule type" value="Genomic_DNA"/>
</dbReference>
<dbReference type="EMBL" id="BC076897">
    <property type="protein sequence ID" value="AAH76897.1"/>
    <property type="molecule type" value="mRNA"/>
</dbReference>
<dbReference type="RefSeq" id="NP_001006829.1">
    <property type="nucleotide sequence ID" value="NM_001006828.2"/>
</dbReference>
<dbReference type="RefSeq" id="XP_031746221.1">
    <property type="nucleotide sequence ID" value="XM_031890361.1"/>
</dbReference>
<dbReference type="RefSeq" id="XP_031746222.1">
    <property type="nucleotide sequence ID" value="XM_031890362.1"/>
</dbReference>
<dbReference type="RefSeq" id="XP_031746223.1">
    <property type="nucleotide sequence ID" value="XM_031890363.1"/>
</dbReference>
<dbReference type="RefSeq" id="XP_031746224.1">
    <property type="nucleotide sequence ID" value="XM_031890364.1"/>
</dbReference>
<dbReference type="SMR" id="Q6DF46"/>
<dbReference type="FunCoup" id="Q6DF46">
    <property type="interactions" value="1124"/>
</dbReference>
<dbReference type="STRING" id="8364.ENSXETP00000022608"/>
<dbReference type="PaxDb" id="8364-ENSXETP00000006250"/>
<dbReference type="GeneID" id="448564"/>
<dbReference type="KEGG" id="xtr:448564"/>
<dbReference type="AGR" id="Xenbase:XB-GENE-945926"/>
<dbReference type="CTD" id="51004"/>
<dbReference type="Xenbase" id="XB-GENE-945926">
    <property type="gene designation" value="coq6"/>
</dbReference>
<dbReference type="eggNOG" id="KOG3855">
    <property type="taxonomic scope" value="Eukaryota"/>
</dbReference>
<dbReference type="HOGENOM" id="CLU_009665_8_0_1"/>
<dbReference type="InParanoid" id="Q6DF46"/>
<dbReference type="OMA" id="VKQMQVW"/>
<dbReference type="OrthoDB" id="683240at2759"/>
<dbReference type="PhylomeDB" id="Q6DF46"/>
<dbReference type="TreeFam" id="TF105772"/>
<dbReference type="Reactome" id="R-XTR-2142789">
    <property type="pathway name" value="Ubiquinol biosynthesis"/>
</dbReference>
<dbReference type="UniPathway" id="UPA00232"/>
<dbReference type="Proteomes" id="UP000008143">
    <property type="component" value="Chromosome 8"/>
</dbReference>
<dbReference type="GO" id="GO:0042995">
    <property type="term" value="C:cell projection"/>
    <property type="evidence" value="ECO:0007669"/>
    <property type="project" value="UniProtKB-SubCell"/>
</dbReference>
<dbReference type="GO" id="GO:0031314">
    <property type="term" value="C:extrinsic component of mitochondrial inner membrane"/>
    <property type="evidence" value="ECO:0007669"/>
    <property type="project" value="UniProtKB-UniRule"/>
</dbReference>
<dbReference type="GO" id="GO:0005794">
    <property type="term" value="C:Golgi apparatus"/>
    <property type="evidence" value="ECO:0007669"/>
    <property type="project" value="UniProtKB-SubCell"/>
</dbReference>
<dbReference type="GO" id="GO:0120538">
    <property type="term" value="F:2-methoxy-6-polyprenolphenol 4-hydroxylase activity"/>
    <property type="evidence" value="ECO:0000250"/>
    <property type="project" value="UniProtKB"/>
</dbReference>
<dbReference type="GO" id="GO:0106364">
    <property type="term" value="F:4-hydroxy-3-all-trans-polyprenylbenzoate oxygenase activity"/>
    <property type="evidence" value="ECO:0000250"/>
    <property type="project" value="UniProtKB"/>
</dbReference>
<dbReference type="GO" id="GO:0071949">
    <property type="term" value="F:FAD binding"/>
    <property type="evidence" value="ECO:0007669"/>
    <property type="project" value="InterPro"/>
</dbReference>
<dbReference type="GO" id="GO:0016712">
    <property type="term" value="F:oxidoreductase activity, acting on paired donors, with incorporation or reduction of molecular oxygen, reduced flavin or flavoprotein as one donor, and incorporation of one atom of oxygen"/>
    <property type="evidence" value="ECO:0007669"/>
    <property type="project" value="UniProtKB-UniRule"/>
</dbReference>
<dbReference type="GO" id="GO:0006744">
    <property type="term" value="P:ubiquinone biosynthetic process"/>
    <property type="evidence" value="ECO:0000250"/>
    <property type="project" value="UniProtKB"/>
</dbReference>
<dbReference type="FunFam" id="3.30.9.10:FF:000111">
    <property type="entry name" value="Ubiquinone biosynthesis monooxygenase COQ6, mitochondrial"/>
    <property type="match status" value="1"/>
</dbReference>
<dbReference type="FunFam" id="3.50.50.60:FF:000066">
    <property type="entry name" value="Ubiquinone biosynthesis monooxygenase COQ6, mitochondrial"/>
    <property type="match status" value="1"/>
</dbReference>
<dbReference type="FunFam" id="3.50.50.60:FF:000086">
    <property type="entry name" value="Ubiquinone biosynthesis monooxygenase COQ6, mitochondrial"/>
    <property type="match status" value="1"/>
</dbReference>
<dbReference type="Gene3D" id="3.50.50.60">
    <property type="entry name" value="FAD/NAD(P)-binding domain"/>
    <property type="match status" value="2"/>
</dbReference>
<dbReference type="HAMAP" id="MF_03193">
    <property type="entry name" value="COQ6_monooxygenase"/>
    <property type="match status" value="1"/>
</dbReference>
<dbReference type="InterPro" id="IPR002938">
    <property type="entry name" value="FAD-bd"/>
</dbReference>
<dbReference type="InterPro" id="IPR036188">
    <property type="entry name" value="FAD/NAD-bd_sf"/>
</dbReference>
<dbReference type="InterPro" id="IPR018168">
    <property type="entry name" value="Ubi_Hdrlase_CS"/>
</dbReference>
<dbReference type="InterPro" id="IPR010971">
    <property type="entry name" value="UbiH/COQ6"/>
</dbReference>
<dbReference type="InterPro" id="IPR051205">
    <property type="entry name" value="UbiH/COQ6_monooxygenase"/>
</dbReference>
<dbReference type="InterPro" id="IPR000689">
    <property type="entry name" value="UbQ_mOase_COQ6"/>
</dbReference>
<dbReference type="NCBIfam" id="TIGR01989">
    <property type="entry name" value="COQ6"/>
    <property type="match status" value="1"/>
</dbReference>
<dbReference type="NCBIfam" id="TIGR01988">
    <property type="entry name" value="Ubi-OHases"/>
    <property type="match status" value="1"/>
</dbReference>
<dbReference type="PANTHER" id="PTHR43876">
    <property type="entry name" value="UBIQUINONE BIOSYNTHESIS MONOOXYGENASE COQ6, MITOCHONDRIAL"/>
    <property type="match status" value="1"/>
</dbReference>
<dbReference type="PANTHER" id="PTHR43876:SF7">
    <property type="entry name" value="UBIQUINONE BIOSYNTHESIS MONOOXYGENASE COQ6, MITOCHONDRIAL"/>
    <property type="match status" value="1"/>
</dbReference>
<dbReference type="Pfam" id="PF01494">
    <property type="entry name" value="FAD_binding_3"/>
    <property type="match status" value="2"/>
</dbReference>
<dbReference type="PRINTS" id="PR00420">
    <property type="entry name" value="RNGMNOXGNASE"/>
</dbReference>
<dbReference type="SUPFAM" id="SSF51905">
    <property type="entry name" value="FAD/NAD(P)-binding domain"/>
    <property type="match status" value="1"/>
</dbReference>
<dbReference type="PROSITE" id="PS01304">
    <property type="entry name" value="UBIH"/>
    <property type="match status" value="1"/>
</dbReference>
<comment type="function">
    <text evidence="1">FAD-dependent monooxygenase required for two non-consecutive steps during ubiquinone biosynthesis. Required for the C5-ring hydroxylation during ubiquinone biosynthesis by catalyzing the hydroxylation of 4-hydroxy-3-(all-trans-polyprenyl)benzoic acid to 3,4-dihydroxy-5-(all-trans-polyprenyl)benzoic acid. Also acts downstream of coq4, for the C1-hydroxylation during ubiquinone biosynthesis by catalyzing the hydroxylation of 2-methoxy-6-(all-trans-polyprenyl)phenol to 2-methoxy-6-(all-trans-polyprenyl)benzene-1,4-diol. The electrons required for the hydroxylation reaction are funneled indirectly to coq6 from NADPH via a ferredoxin/ferredoxin reductase system.</text>
</comment>
<comment type="catalytic activity">
    <reaction evidence="1">
        <text>a 4-hydroxy-3-(all-trans-polyprenyl)benzoate + 2 reduced [2Fe-2S]-[ferredoxin] + O2 + 2 H(+) = a 3,4-dihydroxy-5-(all-trans-polyprenyl)benzoate + 2 oxidized [2Fe-2S]-[ferredoxin] + H2O</text>
        <dbReference type="Rhea" id="RHEA:81195"/>
        <dbReference type="Rhea" id="RHEA-COMP:9514"/>
        <dbReference type="Rhea" id="RHEA-COMP:10000"/>
        <dbReference type="Rhea" id="RHEA-COMP:10001"/>
        <dbReference type="Rhea" id="RHEA-COMP:10930"/>
        <dbReference type="ChEBI" id="CHEBI:15377"/>
        <dbReference type="ChEBI" id="CHEBI:15378"/>
        <dbReference type="ChEBI" id="CHEBI:15379"/>
        <dbReference type="ChEBI" id="CHEBI:33737"/>
        <dbReference type="ChEBI" id="CHEBI:33738"/>
        <dbReference type="ChEBI" id="CHEBI:64694"/>
        <dbReference type="ChEBI" id="CHEBI:78396"/>
        <dbReference type="EC" id="1.14.15.45"/>
    </reaction>
</comment>
<comment type="catalytic activity">
    <reaction evidence="1">
        <text>a 2-methoxy-6-(all-trans-polyprenyl)phenol + 2 reduced [2Fe-2S]-[ferredoxin] + O2 + 2 H(+) = a 2-methoxy-6-(all-trans-polyprenyl)benzene-1,4-diol + 2 oxidized [2Fe-2S]-[ferredoxin] + H2O</text>
        <dbReference type="Rhea" id="RHEA:81183"/>
        <dbReference type="Rhea" id="RHEA-COMP:9551"/>
        <dbReference type="Rhea" id="RHEA-COMP:10000"/>
        <dbReference type="Rhea" id="RHEA-COMP:10001"/>
        <dbReference type="Rhea" id="RHEA-COMP:10858"/>
        <dbReference type="ChEBI" id="CHEBI:15377"/>
        <dbReference type="ChEBI" id="CHEBI:15378"/>
        <dbReference type="ChEBI" id="CHEBI:15379"/>
        <dbReference type="ChEBI" id="CHEBI:33737"/>
        <dbReference type="ChEBI" id="CHEBI:33738"/>
        <dbReference type="ChEBI" id="CHEBI:62731"/>
        <dbReference type="ChEBI" id="CHEBI:84166"/>
        <dbReference type="EC" id="1.14.15.46"/>
    </reaction>
</comment>
<comment type="cofactor">
    <cofactor evidence="1">
        <name>FAD</name>
        <dbReference type="ChEBI" id="CHEBI:57692"/>
    </cofactor>
</comment>
<comment type="pathway">
    <text evidence="1">Cofactor biosynthesis; ubiquinone biosynthesis.</text>
</comment>
<comment type="subunit">
    <text evidence="1">Component of a multi-subunit COQ enzyme complex, composed of at least coq3, coq4, coq5, coq6, coq7 and coq9. Interacts with coq8b and coq7.</text>
</comment>
<comment type="subcellular location">
    <subcellularLocation>
        <location evidence="1">Mitochondrion inner membrane</location>
        <topology evidence="1">Peripheral membrane protein</topology>
        <orientation evidence="1">Matrix side</orientation>
    </subcellularLocation>
    <subcellularLocation>
        <location evidence="1">Golgi apparatus</location>
    </subcellularLocation>
    <subcellularLocation>
        <location evidence="1">Cell projection</location>
    </subcellularLocation>
    <text evidence="1">Localizes to cell processes and Golgi apparatus in podocytes.</text>
</comment>
<comment type="similarity">
    <text evidence="1">Belongs to the UbiH/COQ6 family.</text>
</comment>
<organism>
    <name type="scientific">Xenopus tropicalis</name>
    <name type="common">Western clawed frog</name>
    <name type="synonym">Silurana tropicalis</name>
    <dbReference type="NCBI Taxonomy" id="8364"/>
    <lineage>
        <taxon>Eukaryota</taxon>
        <taxon>Metazoa</taxon>
        <taxon>Chordata</taxon>
        <taxon>Craniata</taxon>
        <taxon>Vertebrata</taxon>
        <taxon>Euteleostomi</taxon>
        <taxon>Amphibia</taxon>
        <taxon>Batrachia</taxon>
        <taxon>Anura</taxon>
        <taxon>Pipoidea</taxon>
        <taxon>Pipidae</taxon>
        <taxon>Xenopodinae</taxon>
        <taxon>Xenopus</taxon>
        <taxon>Silurana</taxon>
    </lineage>
</organism>